<reference key="1">
    <citation type="journal article" date="2011" name="J. Bacteriol.">
        <title>Genome sequence of lineage III Listeria monocytogenes strain HCC23.</title>
        <authorList>
            <person name="Steele C.L."/>
            <person name="Donaldson J.R."/>
            <person name="Paul D."/>
            <person name="Banes M.M."/>
            <person name="Arick T."/>
            <person name="Bridges S.M."/>
            <person name="Lawrence M.L."/>
        </authorList>
    </citation>
    <scope>NUCLEOTIDE SEQUENCE [LARGE SCALE GENOMIC DNA]</scope>
    <source>
        <strain>HCC23</strain>
    </source>
</reference>
<accession>B8DEK7</accession>
<name>3MGH_LISMH</name>
<feature type="chain" id="PRO_1000146267" description="Putative 3-methyladenine DNA glycosylase">
    <location>
        <begin position="1"/>
        <end position="207"/>
    </location>
</feature>
<keyword id="KW-0227">DNA damage</keyword>
<keyword id="KW-0234">DNA repair</keyword>
<keyword id="KW-0378">Hydrolase</keyword>
<sequence length="207" mass="23338">MDTIITNAFFENKTTIELARDILGMRLVHQTTNGKLSGLIVETEAYLGATDMAAHSFQNLRTKRTEVMFSSPGRIYMYQMHRQVLLNFITMPEGIPEAILIRAIEPEEQAKHLMEQNRGGKTGYELTNGPGKLTQALGLSMQDYGKTLFDSNIWLEEAKTPHLIEATNRIGVPNKGIATHFPLRFTVKGSPYLSAQRKSRILADIWE</sequence>
<comment type="similarity">
    <text evidence="1">Belongs to the DNA glycosylase MPG family.</text>
</comment>
<dbReference type="EC" id="3.2.2.-" evidence="1"/>
<dbReference type="EMBL" id="CP001175">
    <property type="protein sequence ID" value="ACK40036.1"/>
    <property type="molecule type" value="Genomic_DNA"/>
</dbReference>
<dbReference type="RefSeq" id="WP_012581644.1">
    <property type="nucleotide sequence ID" value="NC_011660.1"/>
</dbReference>
<dbReference type="SMR" id="B8DEK7"/>
<dbReference type="KEGG" id="lmh:LMHCC_1694"/>
<dbReference type="HOGENOM" id="CLU_060471_2_0_9"/>
<dbReference type="GO" id="GO:0003905">
    <property type="term" value="F:alkylbase DNA N-glycosylase activity"/>
    <property type="evidence" value="ECO:0007669"/>
    <property type="project" value="InterPro"/>
</dbReference>
<dbReference type="GO" id="GO:0003677">
    <property type="term" value="F:DNA binding"/>
    <property type="evidence" value="ECO:0007669"/>
    <property type="project" value="InterPro"/>
</dbReference>
<dbReference type="GO" id="GO:0006284">
    <property type="term" value="P:base-excision repair"/>
    <property type="evidence" value="ECO:0007669"/>
    <property type="project" value="InterPro"/>
</dbReference>
<dbReference type="CDD" id="cd00540">
    <property type="entry name" value="AAG"/>
    <property type="match status" value="1"/>
</dbReference>
<dbReference type="FunFam" id="3.10.300.10:FF:000001">
    <property type="entry name" value="Putative 3-methyladenine DNA glycosylase"/>
    <property type="match status" value="1"/>
</dbReference>
<dbReference type="Gene3D" id="3.10.300.10">
    <property type="entry name" value="Methylpurine-DNA glycosylase (MPG)"/>
    <property type="match status" value="1"/>
</dbReference>
<dbReference type="HAMAP" id="MF_00527">
    <property type="entry name" value="3MGH"/>
    <property type="match status" value="1"/>
</dbReference>
<dbReference type="InterPro" id="IPR011034">
    <property type="entry name" value="Formyl_transferase-like_C_sf"/>
</dbReference>
<dbReference type="InterPro" id="IPR003180">
    <property type="entry name" value="MPG"/>
</dbReference>
<dbReference type="InterPro" id="IPR036995">
    <property type="entry name" value="MPG_sf"/>
</dbReference>
<dbReference type="NCBIfam" id="TIGR00567">
    <property type="entry name" value="3mg"/>
    <property type="match status" value="1"/>
</dbReference>
<dbReference type="NCBIfam" id="NF002002">
    <property type="entry name" value="PRK00802.1-2"/>
    <property type="match status" value="1"/>
</dbReference>
<dbReference type="PANTHER" id="PTHR10429">
    <property type="entry name" value="DNA-3-METHYLADENINE GLYCOSYLASE"/>
    <property type="match status" value="1"/>
</dbReference>
<dbReference type="PANTHER" id="PTHR10429:SF0">
    <property type="entry name" value="DNA-3-METHYLADENINE GLYCOSYLASE"/>
    <property type="match status" value="1"/>
</dbReference>
<dbReference type="Pfam" id="PF02245">
    <property type="entry name" value="Pur_DNA_glyco"/>
    <property type="match status" value="1"/>
</dbReference>
<dbReference type="SUPFAM" id="SSF50486">
    <property type="entry name" value="FMT C-terminal domain-like"/>
    <property type="match status" value="1"/>
</dbReference>
<evidence type="ECO:0000255" key="1">
    <source>
        <dbReference type="HAMAP-Rule" id="MF_00527"/>
    </source>
</evidence>
<protein>
    <recommendedName>
        <fullName evidence="1">Putative 3-methyladenine DNA glycosylase</fullName>
        <ecNumber evidence="1">3.2.2.-</ecNumber>
    </recommendedName>
</protein>
<organism>
    <name type="scientific">Listeria monocytogenes serotype 4a (strain HCC23)</name>
    <dbReference type="NCBI Taxonomy" id="552536"/>
    <lineage>
        <taxon>Bacteria</taxon>
        <taxon>Bacillati</taxon>
        <taxon>Bacillota</taxon>
        <taxon>Bacilli</taxon>
        <taxon>Bacillales</taxon>
        <taxon>Listeriaceae</taxon>
        <taxon>Listeria</taxon>
    </lineage>
</organism>
<proteinExistence type="inferred from homology"/>
<gene>
    <name type="ordered locus">LMHCC_1694</name>
</gene>